<evidence type="ECO:0000255" key="1">
    <source>
        <dbReference type="HAMAP-Rule" id="MF_00005"/>
    </source>
</evidence>
<keyword id="KW-0028">Amino-acid biosynthesis</keyword>
<keyword id="KW-0055">Arginine biosynthesis</keyword>
<keyword id="KW-0067">ATP-binding</keyword>
<keyword id="KW-0963">Cytoplasm</keyword>
<keyword id="KW-0436">Ligase</keyword>
<keyword id="KW-0547">Nucleotide-binding</keyword>
<keyword id="KW-1185">Reference proteome</keyword>
<protein>
    <recommendedName>
        <fullName evidence="1">Argininosuccinate synthase</fullName>
        <ecNumber evidence="1">6.3.4.5</ecNumber>
    </recommendedName>
    <alternativeName>
        <fullName evidence="1">Citrulline--aspartate ligase</fullName>
    </alternativeName>
</protein>
<organism>
    <name type="scientific">Pseudomonas syringae pv. tomato (strain ATCC BAA-871 / DC3000)</name>
    <dbReference type="NCBI Taxonomy" id="223283"/>
    <lineage>
        <taxon>Bacteria</taxon>
        <taxon>Pseudomonadati</taxon>
        <taxon>Pseudomonadota</taxon>
        <taxon>Gammaproteobacteria</taxon>
        <taxon>Pseudomonadales</taxon>
        <taxon>Pseudomonadaceae</taxon>
        <taxon>Pseudomonas</taxon>
    </lineage>
</organism>
<reference key="1">
    <citation type="journal article" date="2003" name="Proc. Natl. Acad. Sci. U.S.A.">
        <title>The complete genome sequence of the Arabidopsis and tomato pathogen Pseudomonas syringae pv. tomato DC3000.</title>
        <authorList>
            <person name="Buell C.R."/>
            <person name="Joardar V."/>
            <person name="Lindeberg M."/>
            <person name="Selengut J."/>
            <person name="Paulsen I.T."/>
            <person name="Gwinn M.L."/>
            <person name="Dodson R.J."/>
            <person name="DeBoy R.T."/>
            <person name="Durkin A.S."/>
            <person name="Kolonay J.F."/>
            <person name="Madupu R."/>
            <person name="Daugherty S.C."/>
            <person name="Brinkac L.M."/>
            <person name="Beanan M.J."/>
            <person name="Haft D.H."/>
            <person name="Nelson W.C."/>
            <person name="Davidsen T.M."/>
            <person name="Zafar N."/>
            <person name="Zhou L."/>
            <person name="Liu J."/>
            <person name="Yuan Q."/>
            <person name="Khouri H.M."/>
            <person name="Fedorova N.B."/>
            <person name="Tran B."/>
            <person name="Russell D."/>
            <person name="Berry K.J."/>
            <person name="Utterback T.R."/>
            <person name="Van Aken S.E."/>
            <person name="Feldblyum T.V."/>
            <person name="D'Ascenzo M."/>
            <person name="Deng W.-L."/>
            <person name="Ramos A.R."/>
            <person name="Alfano J.R."/>
            <person name="Cartinhour S."/>
            <person name="Chatterjee A.K."/>
            <person name="Delaney T.P."/>
            <person name="Lazarowitz S.G."/>
            <person name="Martin G.B."/>
            <person name="Schneider D.J."/>
            <person name="Tang X."/>
            <person name="Bender C.L."/>
            <person name="White O."/>
            <person name="Fraser C.M."/>
            <person name="Collmer A."/>
        </authorList>
    </citation>
    <scope>NUCLEOTIDE SEQUENCE [LARGE SCALE GENOMIC DNA]</scope>
    <source>
        <strain>ATCC BAA-871 / DC3000</strain>
    </source>
</reference>
<feature type="chain" id="PRO_0000148628" description="Argininosuccinate synthase">
    <location>
        <begin position="1"/>
        <end position="405"/>
    </location>
</feature>
<feature type="binding site" evidence="1">
    <location>
        <begin position="10"/>
        <end position="18"/>
    </location>
    <ligand>
        <name>ATP</name>
        <dbReference type="ChEBI" id="CHEBI:30616"/>
    </ligand>
</feature>
<feature type="binding site" evidence="1">
    <location>
        <position position="37"/>
    </location>
    <ligand>
        <name>ATP</name>
        <dbReference type="ChEBI" id="CHEBI:30616"/>
    </ligand>
</feature>
<feature type="binding site" evidence="1">
    <location>
        <position position="88"/>
    </location>
    <ligand>
        <name>L-citrulline</name>
        <dbReference type="ChEBI" id="CHEBI:57743"/>
    </ligand>
</feature>
<feature type="binding site" evidence="1">
    <location>
        <position position="93"/>
    </location>
    <ligand>
        <name>L-citrulline</name>
        <dbReference type="ChEBI" id="CHEBI:57743"/>
    </ligand>
</feature>
<feature type="binding site" evidence="1">
    <location>
        <position position="118"/>
    </location>
    <ligand>
        <name>ATP</name>
        <dbReference type="ChEBI" id="CHEBI:30616"/>
    </ligand>
</feature>
<feature type="binding site" evidence="1">
    <location>
        <position position="120"/>
    </location>
    <ligand>
        <name>L-aspartate</name>
        <dbReference type="ChEBI" id="CHEBI:29991"/>
    </ligand>
</feature>
<feature type="binding site" evidence="1">
    <location>
        <position position="124"/>
    </location>
    <ligand>
        <name>L-aspartate</name>
        <dbReference type="ChEBI" id="CHEBI:29991"/>
    </ligand>
</feature>
<feature type="binding site" evidence="1">
    <location>
        <position position="124"/>
    </location>
    <ligand>
        <name>L-citrulline</name>
        <dbReference type="ChEBI" id="CHEBI:57743"/>
    </ligand>
</feature>
<feature type="binding site" evidence="1">
    <location>
        <position position="125"/>
    </location>
    <ligand>
        <name>L-aspartate</name>
        <dbReference type="ChEBI" id="CHEBI:29991"/>
    </ligand>
</feature>
<feature type="binding site" evidence="1">
    <location>
        <position position="128"/>
    </location>
    <ligand>
        <name>L-citrulline</name>
        <dbReference type="ChEBI" id="CHEBI:57743"/>
    </ligand>
</feature>
<feature type="binding site" evidence="1">
    <location>
        <position position="179"/>
    </location>
    <ligand>
        <name>L-citrulline</name>
        <dbReference type="ChEBI" id="CHEBI:57743"/>
    </ligand>
</feature>
<feature type="binding site" evidence="1">
    <location>
        <position position="188"/>
    </location>
    <ligand>
        <name>L-citrulline</name>
        <dbReference type="ChEBI" id="CHEBI:57743"/>
    </ligand>
</feature>
<feature type="binding site" evidence="1">
    <location>
        <position position="264"/>
    </location>
    <ligand>
        <name>L-citrulline</name>
        <dbReference type="ChEBI" id="CHEBI:57743"/>
    </ligand>
</feature>
<feature type="binding site" evidence="1">
    <location>
        <position position="276"/>
    </location>
    <ligand>
        <name>L-citrulline</name>
        <dbReference type="ChEBI" id="CHEBI:57743"/>
    </ligand>
</feature>
<comment type="catalytic activity">
    <reaction evidence="1">
        <text>L-citrulline + L-aspartate + ATP = 2-(N(omega)-L-arginino)succinate + AMP + diphosphate + H(+)</text>
        <dbReference type="Rhea" id="RHEA:10932"/>
        <dbReference type="ChEBI" id="CHEBI:15378"/>
        <dbReference type="ChEBI" id="CHEBI:29991"/>
        <dbReference type="ChEBI" id="CHEBI:30616"/>
        <dbReference type="ChEBI" id="CHEBI:33019"/>
        <dbReference type="ChEBI" id="CHEBI:57472"/>
        <dbReference type="ChEBI" id="CHEBI:57743"/>
        <dbReference type="ChEBI" id="CHEBI:456215"/>
        <dbReference type="EC" id="6.3.4.5"/>
    </reaction>
</comment>
<comment type="pathway">
    <text evidence="1">Amino-acid biosynthesis; L-arginine biosynthesis; L-arginine from L-ornithine and carbamoyl phosphate: step 2/3.</text>
</comment>
<comment type="subunit">
    <text evidence="1">Homotetramer.</text>
</comment>
<comment type="subcellular location">
    <subcellularLocation>
        <location evidence="1">Cytoplasm</location>
    </subcellularLocation>
</comment>
<comment type="similarity">
    <text evidence="1">Belongs to the argininosuccinate synthase family. Type 1 subfamily.</text>
</comment>
<sequence length="405" mass="45412">MADVNKVVLAYSGGLDTSVILKWLQDTYNCEVVTFTADLGQGEEVEPARAKAQAMGVKEIYIDDLREEFVRDFVFPMFRANTVYEGEYLLGTSIARPLIAKRLIEIANETGADAISHGATGKGNDQVRFELGAYALKPGVKVIAPWREWDLLSREKLMDYAEKHNIPIERHGKKKSPYSMDANLLHISYEGGVLEDTWTEHEEDMWRWTKSPEDAPNVATYLELTYRNGDIVALDGVDMTPATVLATLNRIGGENGIGRLDIVENRYVGMKSRGCYETPGGTIMLRAHRAIESITLDREVAHLKDELMVKYASLIYTGYWWSPERLMLQQMIDASQVHVNGVVRLKLYKGNVIVTGRKSDDSLFDANIATFEDDAGAYDQADAAGFIKLNALRMRIAANKGRKLF</sequence>
<gene>
    <name evidence="1" type="primary">argG</name>
    <name type="ordered locus">PSPTO_4155</name>
</gene>
<proteinExistence type="inferred from homology"/>
<name>ASSY_PSESM</name>
<dbReference type="EC" id="6.3.4.5" evidence="1"/>
<dbReference type="EMBL" id="AE016853">
    <property type="protein sequence ID" value="AAO57611.1"/>
    <property type="molecule type" value="Genomic_DNA"/>
</dbReference>
<dbReference type="RefSeq" id="NP_793916.1">
    <property type="nucleotide sequence ID" value="NC_004578.1"/>
</dbReference>
<dbReference type="RefSeq" id="WP_005620033.1">
    <property type="nucleotide sequence ID" value="NC_004578.1"/>
</dbReference>
<dbReference type="SMR" id="Q87XM3"/>
<dbReference type="STRING" id="223283.PSPTO_4155"/>
<dbReference type="GeneID" id="1185835"/>
<dbReference type="KEGG" id="pst:PSPTO_4155"/>
<dbReference type="PATRIC" id="fig|223283.9.peg.4265"/>
<dbReference type="eggNOG" id="COG0137">
    <property type="taxonomic scope" value="Bacteria"/>
</dbReference>
<dbReference type="HOGENOM" id="CLU_032784_4_2_6"/>
<dbReference type="OrthoDB" id="9801641at2"/>
<dbReference type="PhylomeDB" id="Q87XM3"/>
<dbReference type="UniPathway" id="UPA00068">
    <property type="reaction ID" value="UER00113"/>
</dbReference>
<dbReference type="Proteomes" id="UP000002515">
    <property type="component" value="Chromosome"/>
</dbReference>
<dbReference type="GO" id="GO:0005737">
    <property type="term" value="C:cytoplasm"/>
    <property type="evidence" value="ECO:0007669"/>
    <property type="project" value="UniProtKB-SubCell"/>
</dbReference>
<dbReference type="GO" id="GO:0004055">
    <property type="term" value="F:argininosuccinate synthase activity"/>
    <property type="evidence" value="ECO:0007669"/>
    <property type="project" value="UniProtKB-UniRule"/>
</dbReference>
<dbReference type="GO" id="GO:0005524">
    <property type="term" value="F:ATP binding"/>
    <property type="evidence" value="ECO:0007669"/>
    <property type="project" value="UniProtKB-UniRule"/>
</dbReference>
<dbReference type="GO" id="GO:0000053">
    <property type="term" value="P:argininosuccinate metabolic process"/>
    <property type="evidence" value="ECO:0007669"/>
    <property type="project" value="TreeGrafter"/>
</dbReference>
<dbReference type="GO" id="GO:0006526">
    <property type="term" value="P:L-arginine biosynthetic process"/>
    <property type="evidence" value="ECO:0007669"/>
    <property type="project" value="UniProtKB-UniRule"/>
</dbReference>
<dbReference type="GO" id="GO:0000050">
    <property type="term" value="P:urea cycle"/>
    <property type="evidence" value="ECO:0007669"/>
    <property type="project" value="TreeGrafter"/>
</dbReference>
<dbReference type="CDD" id="cd01999">
    <property type="entry name" value="ASS"/>
    <property type="match status" value="1"/>
</dbReference>
<dbReference type="FunFam" id="1.20.5.470:FF:000001">
    <property type="entry name" value="Argininosuccinate synthase"/>
    <property type="match status" value="1"/>
</dbReference>
<dbReference type="FunFam" id="3.40.50.620:FF:000019">
    <property type="entry name" value="Argininosuccinate synthase"/>
    <property type="match status" value="1"/>
</dbReference>
<dbReference type="FunFam" id="3.90.1260.10:FF:000001">
    <property type="entry name" value="Argininosuccinate synthase"/>
    <property type="match status" value="1"/>
</dbReference>
<dbReference type="Gene3D" id="3.90.1260.10">
    <property type="entry name" value="Argininosuccinate synthetase, chain A, domain 2"/>
    <property type="match status" value="1"/>
</dbReference>
<dbReference type="Gene3D" id="3.40.50.620">
    <property type="entry name" value="HUPs"/>
    <property type="match status" value="1"/>
</dbReference>
<dbReference type="Gene3D" id="1.20.5.470">
    <property type="entry name" value="Single helix bin"/>
    <property type="match status" value="1"/>
</dbReference>
<dbReference type="HAMAP" id="MF_00005">
    <property type="entry name" value="Arg_succ_synth_type1"/>
    <property type="match status" value="1"/>
</dbReference>
<dbReference type="InterPro" id="IPR048268">
    <property type="entry name" value="Arginosuc_syn_C"/>
</dbReference>
<dbReference type="InterPro" id="IPR048267">
    <property type="entry name" value="Arginosuc_syn_N"/>
</dbReference>
<dbReference type="InterPro" id="IPR001518">
    <property type="entry name" value="Arginosuc_synth"/>
</dbReference>
<dbReference type="InterPro" id="IPR018223">
    <property type="entry name" value="Arginosuc_synth_CS"/>
</dbReference>
<dbReference type="InterPro" id="IPR023434">
    <property type="entry name" value="Arginosuc_synth_type_1_subfam"/>
</dbReference>
<dbReference type="InterPro" id="IPR024074">
    <property type="entry name" value="AS_cat/multimer_dom_body"/>
</dbReference>
<dbReference type="InterPro" id="IPR014729">
    <property type="entry name" value="Rossmann-like_a/b/a_fold"/>
</dbReference>
<dbReference type="NCBIfam" id="TIGR00032">
    <property type="entry name" value="argG"/>
    <property type="match status" value="1"/>
</dbReference>
<dbReference type="NCBIfam" id="NF001770">
    <property type="entry name" value="PRK00509.1"/>
    <property type="match status" value="1"/>
</dbReference>
<dbReference type="PANTHER" id="PTHR11587">
    <property type="entry name" value="ARGININOSUCCINATE SYNTHASE"/>
    <property type="match status" value="1"/>
</dbReference>
<dbReference type="PANTHER" id="PTHR11587:SF2">
    <property type="entry name" value="ARGININOSUCCINATE SYNTHASE"/>
    <property type="match status" value="1"/>
</dbReference>
<dbReference type="Pfam" id="PF20979">
    <property type="entry name" value="Arginosuc_syn_C"/>
    <property type="match status" value="1"/>
</dbReference>
<dbReference type="Pfam" id="PF00764">
    <property type="entry name" value="Arginosuc_synth"/>
    <property type="match status" value="1"/>
</dbReference>
<dbReference type="SUPFAM" id="SSF52402">
    <property type="entry name" value="Adenine nucleotide alpha hydrolases-like"/>
    <property type="match status" value="1"/>
</dbReference>
<dbReference type="SUPFAM" id="SSF69864">
    <property type="entry name" value="Argininosuccinate synthetase, C-terminal domain"/>
    <property type="match status" value="1"/>
</dbReference>
<dbReference type="PROSITE" id="PS00564">
    <property type="entry name" value="ARGININOSUCCIN_SYN_1"/>
    <property type="match status" value="1"/>
</dbReference>
<dbReference type="PROSITE" id="PS00565">
    <property type="entry name" value="ARGININOSUCCIN_SYN_2"/>
    <property type="match status" value="1"/>
</dbReference>
<accession>Q87XM3</accession>